<reference evidence="8 11" key="1">
    <citation type="journal article" date="2006" name="Genetics">
        <title>Molecular characterization of teflon, a gene required for meiotic autosome segregation in male Drosophila melanogaster.</title>
        <authorList>
            <person name="Arya G.H."/>
            <person name="Lodico M.J.P."/>
            <person name="Ahmad O.I."/>
            <person name="Amin R."/>
            <person name="Tomkiel J.E."/>
        </authorList>
    </citation>
    <scope>NUCLEOTIDE SEQUENCE [GENOMIC DNA]</scope>
    <scope>FUNCTION</scope>
    <scope>SUBCELLULAR LOCATION</scope>
    <scope>TISSUE SPECIFICITY</scope>
    <scope>DEVELOPMENTAL STAGE</scope>
    <scope>MUTAGENESIS OF CYS-38</scope>
</reference>
<reference evidence="9" key="2">
    <citation type="journal article" date="2000" name="Science">
        <title>The genome sequence of Drosophila melanogaster.</title>
        <authorList>
            <person name="Adams M.D."/>
            <person name="Celniker S.E."/>
            <person name="Holt R.A."/>
            <person name="Evans C.A."/>
            <person name="Gocayne J.D."/>
            <person name="Amanatides P.G."/>
            <person name="Scherer S.E."/>
            <person name="Li P.W."/>
            <person name="Hoskins R.A."/>
            <person name="Galle R.F."/>
            <person name="George R.A."/>
            <person name="Lewis S.E."/>
            <person name="Richards S."/>
            <person name="Ashburner M."/>
            <person name="Henderson S.N."/>
            <person name="Sutton G.G."/>
            <person name="Wortman J.R."/>
            <person name="Yandell M.D."/>
            <person name="Zhang Q."/>
            <person name="Chen L.X."/>
            <person name="Brandon R.C."/>
            <person name="Rogers Y.-H.C."/>
            <person name="Blazej R.G."/>
            <person name="Champe M."/>
            <person name="Pfeiffer B.D."/>
            <person name="Wan K.H."/>
            <person name="Doyle C."/>
            <person name="Baxter E.G."/>
            <person name="Helt G."/>
            <person name="Nelson C.R."/>
            <person name="Miklos G.L.G."/>
            <person name="Abril J.F."/>
            <person name="Agbayani A."/>
            <person name="An H.-J."/>
            <person name="Andrews-Pfannkoch C."/>
            <person name="Baldwin D."/>
            <person name="Ballew R.M."/>
            <person name="Basu A."/>
            <person name="Baxendale J."/>
            <person name="Bayraktaroglu L."/>
            <person name="Beasley E.M."/>
            <person name="Beeson K.Y."/>
            <person name="Benos P.V."/>
            <person name="Berman B.P."/>
            <person name="Bhandari D."/>
            <person name="Bolshakov S."/>
            <person name="Borkova D."/>
            <person name="Botchan M.R."/>
            <person name="Bouck J."/>
            <person name="Brokstein P."/>
            <person name="Brottier P."/>
            <person name="Burtis K.C."/>
            <person name="Busam D.A."/>
            <person name="Butler H."/>
            <person name="Cadieu E."/>
            <person name="Center A."/>
            <person name="Chandra I."/>
            <person name="Cherry J.M."/>
            <person name="Cawley S."/>
            <person name="Dahlke C."/>
            <person name="Davenport L.B."/>
            <person name="Davies P."/>
            <person name="de Pablos B."/>
            <person name="Delcher A."/>
            <person name="Deng Z."/>
            <person name="Mays A.D."/>
            <person name="Dew I."/>
            <person name="Dietz S.M."/>
            <person name="Dodson K."/>
            <person name="Doup L.E."/>
            <person name="Downes M."/>
            <person name="Dugan-Rocha S."/>
            <person name="Dunkov B.C."/>
            <person name="Dunn P."/>
            <person name="Durbin K.J."/>
            <person name="Evangelista C.C."/>
            <person name="Ferraz C."/>
            <person name="Ferriera S."/>
            <person name="Fleischmann W."/>
            <person name="Fosler C."/>
            <person name="Gabrielian A.E."/>
            <person name="Garg N.S."/>
            <person name="Gelbart W.M."/>
            <person name="Glasser K."/>
            <person name="Glodek A."/>
            <person name="Gong F."/>
            <person name="Gorrell J.H."/>
            <person name="Gu Z."/>
            <person name="Guan P."/>
            <person name="Harris M."/>
            <person name="Harris N.L."/>
            <person name="Harvey D.A."/>
            <person name="Heiman T.J."/>
            <person name="Hernandez J.R."/>
            <person name="Houck J."/>
            <person name="Hostin D."/>
            <person name="Houston K.A."/>
            <person name="Howland T.J."/>
            <person name="Wei M.-H."/>
            <person name="Ibegwam C."/>
            <person name="Jalali M."/>
            <person name="Kalush F."/>
            <person name="Karpen G.H."/>
            <person name="Ke Z."/>
            <person name="Kennison J.A."/>
            <person name="Ketchum K.A."/>
            <person name="Kimmel B.E."/>
            <person name="Kodira C.D."/>
            <person name="Kraft C.L."/>
            <person name="Kravitz S."/>
            <person name="Kulp D."/>
            <person name="Lai Z."/>
            <person name="Lasko P."/>
            <person name="Lei Y."/>
            <person name="Levitsky A.A."/>
            <person name="Li J.H."/>
            <person name="Li Z."/>
            <person name="Liang Y."/>
            <person name="Lin X."/>
            <person name="Liu X."/>
            <person name="Mattei B."/>
            <person name="McIntosh T.C."/>
            <person name="McLeod M.P."/>
            <person name="McPherson D."/>
            <person name="Merkulov G."/>
            <person name="Milshina N.V."/>
            <person name="Mobarry C."/>
            <person name="Morris J."/>
            <person name="Moshrefi A."/>
            <person name="Mount S.M."/>
            <person name="Moy M."/>
            <person name="Murphy B."/>
            <person name="Murphy L."/>
            <person name="Muzny D.M."/>
            <person name="Nelson D.L."/>
            <person name="Nelson D.R."/>
            <person name="Nelson K.A."/>
            <person name="Nixon K."/>
            <person name="Nusskern D.R."/>
            <person name="Pacleb J.M."/>
            <person name="Palazzolo M."/>
            <person name="Pittman G.S."/>
            <person name="Pan S."/>
            <person name="Pollard J."/>
            <person name="Puri V."/>
            <person name="Reese M.G."/>
            <person name="Reinert K."/>
            <person name="Remington K."/>
            <person name="Saunders R.D.C."/>
            <person name="Scheeler F."/>
            <person name="Shen H."/>
            <person name="Shue B.C."/>
            <person name="Siden-Kiamos I."/>
            <person name="Simpson M."/>
            <person name="Skupski M.P."/>
            <person name="Smith T.J."/>
            <person name="Spier E."/>
            <person name="Spradling A.C."/>
            <person name="Stapleton M."/>
            <person name="Strong R."/>
            <person name="Sun E."/>
            <person name="Svirskas R."/>
            <person name="Tector C."/>
            <person name="Turner R."/>
            <person name="Venter E."/>
            <person name="Wang A.H."/>
            <person name="Wang X."/>
            <person name="Wang Z.-Y."/>
            <person name="Wassarman D.A."/>
            <person name="Weinstock G.M."/>
            <person name="Weissenbach J."/>
            <person name="Williams S.M."/>
            <person name="Woodage T."/>
            <person name="Worley K.C."/>
            <person name="Wu D."/>
            <person name="Yang S."/>
            <person name="Yao Q.A."/>
            <person name="Ye J."/>
            <person name="Yeh R.-F."/>
            <person name="Zaveri J.S."/>
            <person name="Zhan M."/>
            <person name="Zhang G."/>
            <person name="Zhao Q."/>
            <person name="Zheng L."/>
            <person name="Zheng X.H."/>
            <person name="Zhong F.N."/>
            <person name="Zhong W."/>
            <person name="Zhou X."/>
            <person name="Zhu S.C."/>
            <person name="Zhu X."/>
            <person name="Smith H.O."/>
            <person name="Gibbs R.A."/>
            <person name="Myers E.W."/>
            <person name="Rubin G.M."/>
            <person name="Venter J.C."/>
        </authorList>
    </citation>
    <scope>NUCLEOTIDE SEQUENCE [LARGE SCALE GENOMIC DNA]</scope>
    <source>
        <strain>Berkeley</strain>
    </source>
</reference>
<reference evidence="8 9" key="3">
    <citation type="journal article" date="2002" name="Genome Biol.">
        <title>Annotation of the Drosophila melanogaster euchromatic genome: a systematic review.</title>
        <authorList>
            <person name="Misra S."/>
            <person name="Crosby M.A."/>
            <person name="Mungall C.J."/>
            <person name="Matthews B.B."/>
            <person name="Campbell K.S."/>
            <person name="Hradecky P."/>
            <person name="Huang Y."/>
            <person name="Kaminker J.S."/>
            <person name="Millburn G.H."/>
            <person name="Prochnik S.E."/>
            <person name="Smith C.D."/>
            <person name="Tupy J.L."/>
            <person name="Whitfield E.J."/>
            <person name="Bayraktaroglu L."/>
            <person name="Berman B.P."/>
            <person name="Bettencourt B.R."/>
            <person name="Celniker S.E."/>
            <person name="de Grey A.D.N.J."/>
            <person name="Drysdale R.A."/>
            <person name="Harris N.L."/>
            <person name="Richter J."/>
            <person name="Russo S."/>
            <person name="Schroeder A.J."/>
            <person name="Shu S.Q."/>
            <person name="Stapleton M."/>
            <person name="Yamada C."/>
            <person name="Ashburner M."/>
            <person name="Gelbart W.M."/>
            <person name="Rubin G.M."/>
            <person name="Lewis S.E."/>
        </authorList>
    </citation>
    <scope>GENOME REANNOTATION</scope>
    <source>
        <strain>Berkeley</strain>
    </source>
</reference>
<reference evidence="10" key="4">
    <citation type="journal article" date="2002" name="Genome Biol.">
        <title>A Drosophila full-length cDNA resource.</title>
        <authorList>
            <person name="Stapleton M."/>
            <person name="Carlson J.W."/>
            <person name="Brokstein P."/>
            <person name="Yu C."/>
            <person name="Champe M."/>
            <person name="George R.A."/>
            <person name="Guarin H."/>
            <person name="Kronmiller B."/>
            <person name="Pacleb J.M."/>
            <person name="Park S."/>
            <person name="Wan K.H."/>
            <person name="Rubin G.M."/>
            <person name="Celniker S.E."/>
        </authorList>
    </citation>
    <scope>NUCLEOTIDE SEQUENCE [LARGE SCALE MRNA]</scope>
    <source>
        <strain evidence="10">Berkeley</strain>
        <tissue evidence="4">Embryo</tissue>
    </source>
</reference>
<reference evidence="8 18" key="5">
    <citation type="journal article" date="2009" name="Genetics">
        <title>Molecular population genetics and evolution of Drosophila meiosis genes.</title>
        <authorList>
            <person name="Anderson J.A."/>
            <person name="Gilliland W.D."/>
            <person name="Langley C.H."/>
        </authorList>
    </citation>
    <scope>NUCLEOTIDE SEQUENCE [GENOMIC DNA] OF 74-430</scope>
    <scope>VARIANTS GLU-90; TYR-97; ILE-122; ASN-131; SER-155; CYS-162; MET-211; SER-240; SER-292; ASP-346; ASN-349 AND THR-383</scope>
    <source>
        <strain evidence="12">MW11</strain>
        <strain evidence="13">MW25</strain>
        <strain evidence="14">MW27</strain>
        <strain evidence="30">MW38</strain>
        <strain evidence="34">MW56</strain>
        <strain evidence="35">MW6</strain>
        <strain evidence="36">MW63</strain>
        <strain evidence="40">MW9</strain>
        <strain evidence="15">NC301</strain>
        <strain evidence="16">NC303</strain>
        <strain evidence="17">NC304</strain>
        <strain evidence="18">NC306</strain>
        <strain evidence="19">NC319</strain>
        <strain evidence="20">NC322</strain>
        <strain evidence="21">NC335</strain>
        <strain evidence="22">NC336</strain>
        <strain evidence="23">NC350</strain>
        <strain evidence="24">NC357</strain>
        <strain evidence="25">NC358</strain>
        <strain evidence="26">NC359</strain>
        <strain evidence="27">NC361</strain>
        <strain evidence="28">NC362</strain>
        <strain evidence="29">NC375</strain>
        <strain evidence="31">NC390</strain>
        <strain evidence="32">NC397</strain>
        <strain evidence="33">NC399</strain>
        <strain evidence="37">NC732</strain>
        <strain evidence="38">NC740</strain>
        <strain evidence="39">NC774</strain>
    </source>
</reference>
<reference evidence="8" key="6">
    <citation type="journal article" date="2001" name="Genetics">
        <title>The teflon gene is required for maintenance of autosomal homolog pairing at meiosis I in male Drosophila melanogaster.</title>
        <authorList>
            <person name="Tomkiel J.E."/>
            <person name="Wakimoto B.T."/>
            <person name="Briscoe A. Jr."/>
        </authorList>
    </citation>
    <scope>FUNCTION</scope>
    <scope>SUBCELLULAR LOCATION</scope>
    <scope>TISSUE SPECIFICITY</scope>
</reference>
<feature type="chain" id="PRO_0000377408" description="Protein teflon">
    <location>
        <begin position="1"/>
        <end position="649"/>
    </location>
</feature>
<feature type="zinc finger region" description="C2H2-type 1" evidence="1">
    <location>
        <begin position="33"/>
        <end position="56"/>
    </location>
</feature>
<feature type="zinc finger region" description="C2H2-type 2" evidence="1">
    <location>
        <begin position="599"/>
        <end position="621"/>
    </location>
</feature>
<feature type="zinc finger region" description="C2H2-type 3" evidence="1">
    <location>
        <begin position="625"/>
        <end position="648"/>
    </location>
</feature>
<feature type="region of interest" description="Disordered" evidence="2">
    <location>
        <begin position="78"/>
        <end position="126"/>
    </location>
</feature>
<feature type="compositionally biased region" description="Low complexity" evidence="2">
    <location>
        <begin position="88"/>
        <end position="104"/>
    </location>
</feature>
<feature type="sequence variant" description="In strain: NC732 and NC390." evidence="6">
    <original>G</original>
    <variation>E</variation>
    <location>
        <position position="90"/>
    </location>
</feature>
<feature type="sequence variant" description="In strain: MW6." evidence="6">
    <original>D</original>
    <variation>Y</variation>
    <location>
        <position position="97"/>
    </location>
</feature>
<feature type="sequence variant" description="In strain: MW11, MW27, NC301 and NC397." evidence="6">
    <original>M</original>
    <variation>I</variation>
    <location>
        <position position="122"/>
    </location>
</feature>
<feature type="sequence variant" description="In strain: MW11." evidence="6">
    <original>S</original>
    <variation>N</variation>
    <location>
        <position position="131"/>
    </location>
</feature>
<feature type="sequence variant" description="In strain: MW11." evidence="6">
    <original>N</original>
    <variation>S</variation>
    <location>
        <position position="155"/>
    </location>
</feature>
<feature type="sequence variant" description="In strain: MW25, MW38, MW56, MW63, MW9, NC304, NC357 and NC361." evidence="6">
    <original>R</original>
    <variation>C</variation>
    <location>
        <position position="162"/>
    </location>
</feature>
<feature type="sequence variant" description="In strain: MW6, MW9, MW11, MW25, MW27, MW38, MW56, MW63, NC301, NC304, NC357, NC361, NC390, NC397 and NC732." evidence="6">
    <original>I</original>
    <variation>M</variation>
    <location>
        <position position="211"/>
    </location>
</feature>
<feature type="sequence variant" description="In strain: MW11." evidence="6">
    <original>T</original>
    <variation>S</variation>
    <location>
        <position position="240"/>
    </location>
</feature>
<feature type="sequence variant" description="In strain: NC357." evidence="6">
    <original>A</original>
    <variation>S</variation>
    <location>
        <position position="292"/>
    </location>
</feature>
<feature type="sequence variant" description="In strain: NC397." evidence="6">
    <original>G</original>
    <variation>D</variation>
    <location>
        <position position="346"/>
    </location>
</feature>
<feature type="sequence variant" description="In strain: NC335." evidence="6">
    <original>D</original>
    <variation>N</variation>
    <location>
        <position position="349"/>
    </location>
</feature>
<feature type="sequence variant" description="In strain: MW6, MW27, NC301, NC304 and NC397." evidence="6">
    <original>A</original>
    <variation>T</variation>
    <location>
        <position position="383"/>
    </location>
</feature>
<feature type="mutagenesis site" description="In z5864; Induces 4th chromosome non-disjunction." evidence="5">
    <original>C</original>
    <variation>Y</variation>
    <location>
        <position position="38"/>
    </location>
</feature>
<protein>
    <recommendedName>
        <fullName evidence="7">Protein teflon</fullName>
    </recommendedName>
</protein>
<comment type="function">
    <text evidence="3 5">Specifically required in males for proper segregation of autosomal bivalents at meiosis I. Expression is required in the male germ line prior to spermatocyte stage S4. May have a role as a bridging molecule maintaining adhesion to hold autosome bivalents together via heterochromatic connections.</text>
</comment>
<comment type="subcellular location">
    <subcellularLocation>
        <location evidence="3 5">Nucleus</location>
    </subcellularLocation>
    <subcellularLocation>
        <location>Chromosome</location>
    </subcellularLocation>
    <text evidence="3 5">Male meiotic chromosomes.</text>
</comment>
<comment type="tissue specificity">
    <text evidence="3 5">Expressed at a low level in a variety of tissues, highest expression is in testis.</text>
</comment>
<comment type="developmental stage">
    <text evidence="5">Expressed both maternally and zygotically throughout development.</text>
</comment>
<comment type="miscellaneous">
    <text evidence="5">Drosophilid specific gene duplication generates rgr and tef. Teflon has a function unique to Drosophilids.</text>
</comment>
<comment type="similarity">
    <text evidence="8">Belongs to the Teflon family.</text>
</comment>
<proteinExistence type="evidence at protein level"/>
<accession>Q7K4M4</accession>
<accession>B6UYC2</accession>
<accession>B6UYC7</accession>
<accession>B6UYC8</accession>
<accession>B6UYD0</accession>
<accession>B6UYD1</accession>
<accession>B6UYD2</accession>
<accession>B6UYD3</accession>
<accession>B6UYD5</accession>
<accession>B6UYD6</accession>
<accession>B6UYD8</accession>
<accession>B6UYE0</accession>
<accession>B6UYE5</accession>
<accession>B6UYE6</accession>
<accession>B6UYE9</accession>
<accession>B6UYF1</accession>
<accession>B6UYF2</accession>
<accession>B6UYF3</accession>
<accession>Q5MBE0</accession>
<organism>
    <name type="scientific">Drosophila melanogaster</name>
    <name type="common">Fruit fly</name>
    <dbReference type="NCBI Taxonomy" id="7227"/>
    <lineage>
        <taxon>Eukaryota</taxon>
        <taxon>Metazoa</taxon>
        <taxon>Ecdysozoa</taxon>
        <taxon>Arthropoda</taxon>
        <taxon>Hexapoda</taxon>
        <taxon>Insecta</taxon>
        <taxon>Pterygota</taxon>
        <taxon>Neoptera</taxon>
        <taxon>Endopterygota</taxon>
        <taxon>Diptera</taxon>
        <taxon>Brachycera</taxon>
        <taxon>Muscomorpha</taxon>
        <taxon>Ephydroidea</taxon>
        <taxon>Drosophilidae</taxon>
        <taxon>Drosophila</taxon>
        <taxon>Sophophora</taxon>
    </lineage>
</organism>
<gene>
    <name evidence="10 41" type="primary">tef</name>
    <name type="ORF">CG8961</name>
</gene>
<sequence>MSKFLDMLSGSQCVSLEKCGDVVVSTNDCMIALYCHFCRDLFTQLPEFLRHLQSNHSDVLHFTKEHNVYSVEELLSGEQGKAHEDAQSAGHNSSSGDSSSLMNSEDSRAIEGSEDNSDNSPMKPEQIGKQSEINLLAEVTNILLQTNDKELKPENGVFNRPRKKANNESSSLKICDLKSHTIARTSRKRMSMVKNRILRVLDSDLSAKLEIKPPEPNSKLSITEPIQEDNIPGTCFDTPTKPIPSSSQLSVRKSSLTEANQICTKYAEKKTAPTMPKLLNCVPKPILTSQQAHTNAEISEINETYHLAASQVTKTTKTFPVKITQIDILQPVKLPKTLITPINEEGVSDQVENSTNNINNAQSLPKENTKKFFKKRSELGIKAQGSPNKFFKIIKSKANPIIVKRVQTTSAKASTNKIQIRSNDKTNCFASEFNSTKIRKLKMENCVDLKSEDPCANTNTRLNKLATISSCEILKAVGLPAITDNPIEDTLLPDELETIRKKADQFIKIYRKYDSIWNYRKICPPAKPDFISQQIFALTREVNKTMLCNLANSDIKGIINQISVWHYNIYTQYIDLDTISENARYTLKLFSFLPVSFAYFCKCCDDIFILKKEYLKHLISHQVRFQCTKCIKVFKYKGYYEKHLRNAHS</sequence>
<evidence type="ECO:0000255" key="1">
    <source>
        <dbReference type="PROSITE-ProRule" id="PRU00042"/>
    </source>
</evidence>
<evidence type="ECO:0000256" key="2">
    <source>
        <dbReference type="SAM" id="MobiDB-lite"/>
    </source>
</evidence>
<evidence type="ECO:0000269" key="3">
    <source>
    </source>
</evidence>
<evidence type="ECO:0000269" key="4">
    <source>
    </source>
</evidence>
<evidence type="ECO:0000269" key="5">
    <source>
    </source>
</evidence>
<evidence type="ECO:0000269" key="6">
    <source>
    </source>
</evidence>
<evidence type="ECO:0000303" key="7">
    <source>
    </source>
</evidence>
<evidence type="ECO:0000305" key="8"/>
<evidence type="ECO:0000312" key="9">
    <source>
        <dbReference type="EMBL" id="AAF57911.1"/>
    </source>
</evidence>
<evidence type="ECO:0000312" key="10">
    <source>
        <dbReference type="EMBL" id="AAK93242.1"/>
    </source>
</evidence>
<evidence type="ECO:0000312" key="11">
    <source>
        <dbReference type="EMBL" id="AAV90635.1"/>
    </source>
</evidence>
<evidence type="ECO:0000312" key="12">
    <source>
        <dbReference type="EMBL" id="ACI96578.1"/>
    </source>
</evidence>
<evidence type="ECO:0000312" key="13">
    <source>
        <dbReference type="EMBL" id="ACI96583.1"/>
    </source>
</evidence>
<evidence type="ECO:0000312" key="14">
    <source>
        <dbReference type="EMBL" id="ACI96584.1"/>
    </source>
</evidence>
<evidence type="ECO:0000312" key="15">
    <source>
        <dbReference type="EMBL" id="ACI96585.1"/>
    </source>
</evidence>
<evidence type="ECO:0000312" key="16">
    <source>
        <dbReference type="EMBL" id="ACI96586.1"/>
    </source>
</evidence>
<evidence type="ECO:0000312" key="17">
    <source>
        <dbReference type="EMBL" id="ACI96587.1"/>
    </source>
</evidence>
<evidence type="ECO:0000312" key="18">
    <source>
        <dbReference type="EMBL" id="ACI96588.1"/>
    </source>
</evidence>
<evidence type="ECO:0000312" key="19">
    <source>
        <dbReference type="EMBL" id="ACI96589.1"/>
    </source>
</evidence>
<evidence type="ECO:0000312" key="20">
    <source>
        <dbReference type="EMBL" id="ACI96590.1"/>
    </source>
</evidence>
<evidence type="ECO:0000312" key="21">
    <source>
        <dbReference type="EMBL" id="ACI96591.1"/>
    </source>
</evidence>
<evidence type="ECO:0000312" key="22">
    <source>
        <dbReference type="EMBL" id="ACI96592.1"/>
    </source>
</evidence>
<evidence type="ECO:0000312" key="23">
    <source>
        <dbReference type="EMBL" id="ACI96593.1"/>
    </source>
</evidence>
<evidence type="ECO:0000312" key="24">
    <source>
        <dbReference type="EMBL" id="ACI96594.1"/>
    </source>
</evidence>
<evidence type="ECO:0000312" key="25">
    <source>
        <dbReference type="EMBL" id="ACI96595.1"/>
    </source>
</evidence>
<evidence type="ECO:0000312" key="26">
    <source>
        <dbReference type="EMBL" id="ACI96596.1"/>
    </source>
</evidence>
<evidence type="ECO:0000312" key="27">
    <source>
        <dbReference type="EMBL" id="ACI96597.1"/>
    </source>
</evidence>
<evidence type="ECO:0000312" key="28">
    <source>
        <dbReference type="EMBL" id="ACI96598.1"/>
    </source>
</evidence>
<evidence type="ECO:0000312" key="29">
    <source>
        <dbReference type="EMBL" id="ACI96599.1"/>
    </source>
</evidence>
<evidence type="ECO:0000312" key="30">
    <source>
        <dbReference type="EMBL" id="ACI96600.1"/>
    </source>
</evidence>
<evidence type="ECO:0000312" key="31">
    <source>
        <dbReference type="EMBL" id="ACI96601.1"/>
    </source>
</evidence>
<evidence type="ECO:0000312" key="32">
    <source>
        <dbReference type="EMBL" id="ACI96602.1"/>
    </source>
</evidence>
<evidence type="ECO:0000312" key="33">
    <source>
        <dbReference type="EMBL" id="ACI96603.1"/>
    </source>
</evidence>
<evidence type="ECO:0000312" key="34">
    <source>
        <dbReference type="EMBL" id="ACI96604.1"/>
    </source>
</evidence>
<evidence type="ECO:0000312" key="35">
    <source>
        <dbReference type="EMBL" id="ACI96605.1"/>
    </source>
</evidence>
<evidence type="ECO:0000312" key="36">
    <source>
        <dbReference type="EMBL" id="ACI96606.1"/>
    </source>
</evidence>
<evidence type="ECO:0000312" key="37">
    <source>
        <dbReference type="EMBL" id="ACI96607.1"/>
    </source>
</evidence>
<evidence type="ECO:0000312" key="38">
    <source>
        <dbReference type="EMBL" id="ACI96608.1"/>
    </source>
</evidence>
<evidence type="ECO:0000312" key="39">
    <source>
        <dbReference type="EMBL" id="ACI96609.1"/>
    </source>
</evidence>
<evidence type="ECO:0000312" key="40">
    <source>
        <dbReference type="EMBL" id="ACI96610.1"/>
    </source>
</evidence>
<evidence type="ECO:0000312" key="41">
    <source>
        <dbReference type="FlyBase" id="FBgn0086350"/>
    </source>
</evidence>
<keyword id="KW-0131">Cell cycle</keyword>
<keyword id="KW-0158">Chromosome</keyword>
<keyword id="KW-0159">Chromosome partition</keyword>
<keyword id="KW-0469">Meiosis</keyword>
<keyword id="KW-0479">Metal-binding</keyword>
<keyword id="KW-0539">Nucleus</keyword>
<keyword id="KW-1185">Reference proteome</keyword>
<keyword id="KW-0677">Repeat</keyword>
<keyword id="KW-0862">Zinc</keyword>
<keyword id="KW-0863">Zinc-finger</keyword>
<dbReference type="EMBL" id="AY840220">
    <property type="protein sequence ID" value="AAV90635.1"/>
    <property type="molecule type" value="Genomic_DNA"/>
</dbReference>
<dbReference type="EMBL" id="AE013599">
    <property type="protein sequence ID" value="AAF57911.1"/>
    <property type="molecule type" value="Genomic_DNA"/>
</dbReference>
<dbReference type="EMBL" id="AY051818">
    <property type="protein sequence ID" value="AAK93242.1"/>
    <property type="molecule type" value="mRNA"/>
</dbReference>
<dbReference type="EMBL" id="FJ219520">
    <property type="protein sequence ID" value="ACI96578.1"/>
    <property type="molecule type" value="Genomic_DNA"/>
</dbReference>
<dbReference type="EMBL" id="FJ219525">
    <property type="protein sequence ID" value="ACI96583.1"/>
    <property type="molecule type" value="Genomic_DNA"/>
</dbReference>
<dbReference type="EMBL" id="FJ219526">
    <property type="protein sequence ID" value="ACI96584.1"/>
    <property type="molecule type" value="Genomic_DNA"/>
</dbReference>
<dbReference type="EMBL" id="FJ219527">
    <property type="protein sequence ID" value="ACI96585.1"/>
    <property type="molecule type" value="Genomic_DNA"/>
</dbReference>
<dbReference type="EMBL" id="FJ219528">
    <property type="protein sequence ID" value="ACI96586.1"/>
    <property type="molecule type" value="Genomic_DNA"/>
</dbReference>
<dbReference type="EMBL" id="FJ219529">
    <property type="protein sequence ID" value="ACI96587.1"/>
    <property type="molecule type" value="Genomic_DNA"/>
</dbReference>
<dbReference type="EMBL" id="FJ219530">
    <property type="protein sequence ID" value="ACI96588.1"/>
    <property type="molecule type" value="Genomic_DNA"/>
</dbReference>
<dbReference type="EMBL" id="FJ219531">
    <property type="protein sequence ID" value="ACI96589.1"/>
    <property type="molecule type" value="Genomic_DNA"/>
</dbReference>
<dbReference type="EMBL" id="FJ219532">
    <property type="protein sequence ID" value="ACI96590.1"/>
    <property type="molecule type" value="Genomic_DNA"/>
</dbReference>
<dbReference type="EMBL" id="FJ219533">
    <property type="protein sequence ID" value="ACI96591.1"/>
    <property type="molecule type" value="Genomic_DNA"/>
</dbReference>
<dbReference type="EMBL" id="FJ219534">
    <property type="protein sequence ID" value="ACI96592.1"/>
    <property type="molecule type" value="Genomic_DNA"/>
</dbReference>
<dbReference type="EMBL" id="FJ219535">
    <property type="protein sequence ID" value="ACI96593.1"/>
    <property type="molecule type" value="Genomic_DNA"/>
</dbReference>
<dbReference type="EMBL" id="FJ219536">
    <property type="protein sequence ID" value="ACI96594.1"/>
    <property type="molecule type" value="Genomic_DNA"/>
</dbReference>
<dbReference type="EMBL" id="FJ219537">
    <property type="protein sequence ID" value="ACI96595.1"/>
    <property type="molecule type" value="Genomic_DNA"/>
</dbReference>
<dbReference type="EMBL" id="FJ219538">
    <property type="protein sequence ID" value="ACI96596.1"/>
    <property type="molecule type" value="Genomic_DNA"/>
</dbReference>
<dbReference type="EMBL" id="FJ219539">
    <property type="protein sequence ID" value="ACI96597.1"/>
    <property type="molecule type" value="Genomic_DNA"/>
</dbReference>
<dbReference type="EMBL" id="FJ219540">
    <property type="protein sequence ID" value="ACI96598.1"/>
    <property type="molecule type" value="Genomic_DNA"/>
</dbReference>
<dbReference type="EMBL" id="FJ219541">
    <property type="protein sequence ID" value="ACI96599.1"/>
    <property type="molecule type" value="Genomic_DNA"/>
</dbReference>
<dbReference type="EMBL" id="FJ219542">
    <property type="protein sequence ID" value="ACI96600.1"/>
    <property type="molecule type" value="Genomic_DNA"/>
</dbReference>
<dbReference type="EMBL" id="FJ219543">
    <property type="protein sequence ID" value="ACI96601.1"/>
    <property type="molecule type" value="Genomic_DNA"/>
</dbReference>
<dbReference type="EMBL" id="FJ219544">
    <property type="protein sequence ID" value="ACI96602.1"/>
    <property type="molecule type" value="Genomic_DNA"/>
</dbReference>
<dbReference type="EMBL" id="FJ219545">
    <property type="protein sequence ID" value="ACI96603.1"/>
    <property type="molecule type" value="Genomic_DNA"/>
</dbReference>
<dbReference type="EMBL" id="FJ219546">
    <property type="protein sequence ID" value="ACI96604.1"/>
    <property type="molecule type" value="Genomic_DNA"/>
</dbReference>
<dbReference type="EMBL" id="FJ219547">
    <property type="protein sequence ID" value="ACI96605.1"/>
    <property type="molecule type" value="Genomic_DNA"/>
</dbReference>
<dbReference type="EMBL" id="FJ219548">
    <property type="protein sequence ID" value="ACI96606.1"/>
    <property type="molecule type" value="Genomic_DNA"/>
</dbReference>
<dbReference type="EMBL" id="FJ219549">
    <property type="protein sequence ID" value="ACI96607.1"/>
    <property type="molecule type" value="Genomic_DNA"/>
</dbReference>
<dbReference type="EMBL" id="FJ219550">
    <property type="protein sequence ID" value="ACI96608.1"/>
    <property type="molecule type" value="Genomic_DNA"/>
</dbReference>
<dbReference type="EMBL" id="FJ219551">
    <property type="protein sequence ID" value="ACI96609.1"/>
    <property type="molecule type" value="Genomic_DNA"/>
</dbReference>
<dbReference type="EMBL" id="FJ219552">
    <property type="protein sequence ID" value="ACI96610.1"/>
    <property type="molecule type" value="Genomic_DNA"/>
</dbReference>
<dbReference type="RefSeq" id="NP_523766.1">
    <property type="nucleotide sequence ID" value="NM_079042.4"/>
</dbReference>
<dbReference type="BioGRID" id="62620">
    <property type="interactions" value="4"/>
</dbReference>
<dbReference type="FunCoup" id="Q7K4M4">
    <property type="interactions" value="195"/>
</dbReference>
<dbReference type="IntAct" id="Q7K4M4">
    <property type="interactions" value="3"/>
</dbReference>
<dbReference type="STRING" id="7227.FBpp0086165"/>
<dbReference type="PaxDb" id="7227-FBpp0086165"/>
<dbReference type="DNASU" id="36920"/>
<dbReference type="EnsemblMetazoa" id="FBtr0087014">
    <property type="protein sequence ID" value="FBpp0086165"/>
    <property type="gene ID" value="FBgn0086350"/>
</dbReference>
<dbReference type="GeneID" id="36920"/>
<dbReference type="KEGG" id="dme:Dmel_CG8961"/>
<dbReference type="UCSC" id="CG8961-RA">
    <property type="organism name" value="d. melanogaster"/>
</dbReference>
<dbReference type="AGR" id="FB:FBgn0086350"/>
<dbReference type="CTD" id="7008"/>
<dbReference type="FlyBase" id="FBgn0086350">
    <property type="gene designation" value="tef"/>
</dbReference>
<dbReference type="VEuPathDB" id="VectorBase:FBgn0086350"/>
<dbReference type="eggNOG" id="ENOG502T9CV">
    <property type="taxonomic scope" value="Eukaryota"/>
</dbReference>
<dbReference type="HOGENOM" id="CLU_014432_0_0_1"/>
<dbReference type="InParanoid" id="Q7K4M4"/>
<dbReference type="OMA" id="TKEHNVY"/>
<dbReference type="OrthoDB" id="8067562at2759"/>
<dbReference type="PhylomeDB" id="Q7K4M4"/>
<dbReference type="BioGRID-ORCS" id="36920">
    <property type="hits" value="0 hits in 1 CRISPR screen"/>
</dbReference>
<dbReference type="GenomeRNAi" id="36920"/>
<dbReference type="PRO" id="PR:Q7K4M4"/>
<dbReference type="Proteomes" id="UP000000803">
    <property type="component" value="Chromosome 2R"/>
</dbReference>
<dbReference type="Bgee" id="FBgn0086350">
    <property type="expression patterns" value="Expressed in cleaving embryo and 30 other cell types or tissues"/>
</dbReference>
<dbReference type="GO" id="GO:0030849">
    <property type="term" value="C:autosome"/>
    <property type="evidence" value="ECO:0000314"/>
    <property type="project" value="UniProtKB"/>
</dbReference>
<dbReference type="GO" id="GO:0005634">
    <property type="term" value="C:nucleus"/>
    <property type="evidence" value="ECO:0007669"/>
    <property type="project" value="UniProtKB-SubCell"/>
</dbReference>
<dbReference type="GO" id="GO:0008270">
    <property type="term" value="F:zinc ion binding"/>
    <property type="evidence" value="ECO:0007669"/>
    <property type="project" value="UniProtKB-KW"/>
</dbReference>
<dbReference type="GO" id="GO:0007060">
    <property type="term" value="P:male meiosis chromosome segregation"/>
    <property type="evidence" value="ECO:0000315"/>
    <property type="project" value="FlyBase"/>
</dbReference>
<dbReference type="GO" id="GO:0051308">
    <property type="term" value="P:male meiosis chromosome separation"/>
    <property type="evidence" value="ECO:0000315"/>
    <property type="project" value="UniProtKB"/>
</dbReference>
<dbReference type="GO" id="GO:0007141">
    <property type="term" value="P:male meiosis I"/>
    <property type="evidence" value="ECO:0000315"/>
    <property type="project" value="FlyBase"/>
</dbReference>
<dbReference type="InterPro" id="IPR013087">
    <property type="entry name" value="Znf_C2H2_type"/>
</dbReference>
<dbReference type="SMART" id="SM00355">
    <property type="entry name" value="ZnF_C2H2"/>
    <property type="match status" value="3"/>
</dbReference>
<dbReference type="PROSITE" id="PS00028">
    <property type="entry name" value="ZINC_FINGER_C2H2_1"/>
    <property type="match status" value="3"/>
</dbReference>
<dbReference type="PROSITE" id="PS50157">
    <property type="entry name" value="ZINC_FINGER_C2H2_2"/>
    <property type="match status" value="1"/>
</dbReference>
<name>TEF_DROME</name>